<dbReference type="EMBL" id="AOSW02000936">
    <property type="protein sequence ID" value="RZR58789.1"/>
    <property type="molecule type" value="Genomic_DNA"/>
</dbReference>
<dbReference type="SMR" id="A0A4Q7JG83"/>
<dbReference type="STRING" id="1052797.A0A4Q7JG83"/>
<dbReference type="GO" id="GO:0008061">
    <property type="term" value="F:chitin binding"/>
    <property type="evidence" value="ECO:0007669"/>
    <property type="project" value="UniProtKB-KW"/>
</dbReference>
<dbReference type="CDD" id="cd00118">
    <property type="entry name" value="LysM"/>
    <property type="match status" value="3"/>
</dbReference>
<dbReference type="Gene3D" id="3.10.350.10">
    <property type="entry name" value="LysM domain"/>
    <property type="match status" value="5"/>
</dbReference>
<dbReference type="InterPro" id="IPR052210">
    <property type="entry name" value="LysM1-like"/>
</dbReference>
<dbReference type="InterPro" id="IPR018392">
    <property type="entry name" value="LysM_dom"/>
</dbReference>
<dbReference type="InterPro" id="IPR036779">
    <property type="entry name" value="LysM_dom_sf"/>
</dbReference>
<dbReference type="PANTHER" id="PTHR34997">
    <property type="entry name" value="AM15"/>
    <property type="match status" value="1"/>
</dbReference>
<dbReference type="PANTHER" id="PTHR34997:SF1">
    <property type="entry name" value="PEPTIDOGLYCAN-BINDING LYSIN DOMAIN"/>
    <property type="match status" value="1"/>
</dbReference>
<dbReference type="Pfam" id="PF01476">
    <property type="entry name" value="LysM"/>
    <property type="match status" value="1"/>
</dbReference>
<dbReference type="SMART" id="SM00257">
    <property type="entry name" value="LysM"/>
    <property type="match status" value="3"/>
</dbReference>
<dbReference type="SUPFAM" id="SSF54106">
    <property type="entry name" value="LysM domain"/>
    <property type="match status" value="3"/>
</dbReference>
<dbReference type="PROSITE" id="PS51782">
    <property type="entry name" value="LYSM"/>
    <property type="match status" value="4"/>
</dbReference>
<gene>
    <name evidence="6" type="primary">Lys4</name>
    <name type="ORF">I1G_00010864</name>
</gene>
<accession>A0A4Q7JG83</accession>
<sequence length="577" mass="61424">MRALTAAVLFVAGLTPVLAQDSSPTGPTFPNTVANCNAWYTIVKGDGCDTVEKKFKITPEQFFKWNPDVSTDCVKNFWVGNSYCVGVGKVVSSSKTSTTVKSSSTTQKTSSTSSKLSSSSKPVNTTTTPYSTRNPVTSYNLTQPYTATSLPPAKTQSGQPAYCNQWHWVGTGDTCLTILNLYGSRLTQEQLIIQHSEATALARTSYSVPWTSSQGNATVPAPTDYTPPVKTIVANFTASPQMTGVPQSCQNFYQAQDGDTCDVILKQFDYISREQFFSWNPALQGNCNGLWVGYYYCVANFATGVIPMPPTVTKVPDGAPTAINTCNKWYQAVGNDDCDAITTYFGTFSKSDFIKWNPSVYQDCSGLKTDSWYCVGIPGTPTTRTKPLTTTSLGSLPTQTGISASCKQYWLVSPSDTCASIISNAGVSADDFYKWNPALGGSACKGLQPNYYVCVSLTAAPTDSGSTTTITGPPTKGSNPPTTTTSGGGGGTIQTPSPIMPGMIGGCVRFWFRGKDGASLFCADIAKDAGVSLPDFLKWNPGVGSNCESLWADTWYCVGVSGKPTTMSSGIPTPASK</sequence>
<evidence type="ECO:0000255" key="1"/>
<evidence type="ECO:0000255" key="2">
    <source>
        <dbReference type="PROSITE-ProRule" id="PRU00498"/>
    </source>
</evidence>
<evidence type="ECO:0000255" key="3">
    <source>
        <dbReference type="PROSITE-ProRule" id="PRU01118"/>
    </source>
</evidence>
<evidence type="ECO:0000256" key="4">
    <source>
        <dbReference type="SAM" id="MobiDB-lite"/>
    </source>
</evidence>
<evidence type="ECO:0000269" key="5">
    <source>
    </source>
</evidence>
<evidence type="ECO:0000303" key="6">
    <source>
    </source>
</evidence>
<evidence type="ECO:0000305" key="7"/>
<evidence type="ECO:0000305" key="8">
    <source>
    </source>
</evidence>
<keyword id="KW-0147">Chitin-binding</keyword>
<keyword id="KW-0325">Glycoprotein</keyword>
<keyword id="KW-0677">Repeat</keyword>
<keyword id="KW-0732">Signal</keyword>
<keyword id="KW-0843">Virulence</keyword>
<proteinExistence type="evidence at transcript level"/>
<comment type="function">
    <text evidence="8">Might have a role in sequestration of chitin oligosaccharides (breakdown products of fungal cell walls that are released during invasion and act as triggers of host immunity) to dampen host defense.</text>
</comment>
<comment type="induction">
    <text evidence="5">Expressed constitutively with no significant difference during colonization of banana roots.</text>
</comment>
<comment type="domain">
    <text evidence="8">The LysM (lysin motif) domains are small globular domains involved in binding chitin in eukaryotes. Lys4 contains 5 LysM domains.</text>
</comment>
<comment type="miscellaneous">
    <text evidence="7">In plants, chitin acts as a microbe-associated molecular pattern (MAMP) that is recognized by lysin motif (LysM)-containing plant cell surface-localized pattern recognition receptors (PRRs) that activate a plethora of downstream immune responses.</text>
</comment>
<comment type="similarity">
    <text evidence="7">Belongs to the secreted LysM effector family.</text>
</comment>
<protein>
    <recommendedName>
        <fullName evidence="6">Secreted LysM effector Lys4</fullName>
    </recommendedName>
    <alternativeName>
        <fullName evidence="6">LysM domain-containing protein 4</fullName>
    </alternativeName>
</protein>
<organism>
    <name type="scientific">Pochonia chlamydosporia (strain 123)</name>
    <name type="common">Metacordyceps chlamydosporia</name>
    <dbReference type="NCBI Taxonomy" id="1052797"/>
    <lineage>
        <taxon>Eukaryota</taxon>
        <taxon>Fungi</taxon>
        <taxon>Dikarya</taxon>
        <taxon>Ascomycota</taxon>
        <taxon>Pezizomycotina</taxon>
        <taxon>Sordariomycetes</taxon>
        <taxon>Hypocreomycetidae</taxon>
        <taxon>Hypocreales</taxon>
        <taxon>Clavicipitaceae</taxon>
        <taxon>Pochonia</taxon>
    </lineage>
</organism>
<feature type="signal peptide" evidence="1">
    <location>
        <begin position="1"/>
        <end position="19"/>
    </location>
</feature>
<feature type="chain" id="PRO_5020963946" description="Secreted LysM effector Lys4">
    <location>
        <begin position="20"/>
        <end position="577"/>
    </location>
</feature>
<feature type="domain" description="LysM 1" evidence="3">
    <location>
        <begin position="38"/>
        <end position="85"/>
    </location>
</feature>
<feature type="domain" description="LysM 2" evidence="3">
    <location>
        <begin position="251"/>
        <end position="298"/>
    </location>
</feature>
<feature type="domain" description="LysM 3" evidence="3">
    <location>
        <begin position="328"/>
        <end position="375"/>
    </location>
</feature>
<feature type="domain" description="LysM 4" evidence="3">
    <location>
        <begin position="408"/>
        <end position="455"/>
    </location>
</feature>
<feature type="domain" description="LysM 5" evidence="3">
    <location>
        <begin position="510"/>
        <end position="558"/>
    </location>
</feature>
<feature type="region of interest" description="Disordered" evidence="4">
    <location>
        <begin position="96"/>
        <end position="135"/>
    </location>
</feature>
<feature type="region of interest" description="Disordered" evidence="4">
    <location>
        <begin position="464"/>
        <end position="490"/>
    </location>
</feature>
<feature type="compositionally biased region" description="Low complexity" evidence="4">
    <location>
        <begin position="96"/>
        <end position="121"/>
    </location>
</feature>
<feature type="compositionally biased region" description="Polar residues" evidence="4">
    <location>
        <begin position="122"/>
        <end position="135"/>
    </location>
</feature>
<feature type="compositionally biased region" description="Low complexity" evidence="4">
    <location>
        <begin position="464"/>
        <end position="485"/>
    </location>
</feature>
<feature type="glycosylation site" description="N-linked (GlcNAc...) asparagine" evidence="2">
    <location>
        <position position="124"/>
    </location>
</feature>
<feature type="glycosylation site" description="N-linked (GlcNAc...) asparagine" evidence="2">
    <location>
        <position position="140"/>
    </location>
</feature>
<feature type="glycosylation site" description="N-linked (GlcNAc...) asparagine" evidence="2">
    <location>
        <position position="216"/>
    </location>
</feature>
<feature type="glycosylation site" description="N-linked (GlcNAc...) asparagine" evidence="2">
    <location>
        <position position="235"/>
    </location>
</feature>
<reference key="1">
    <citation type="journal article" date="2014" name="Fungal Genet. Biol.">
        <title>Sequencing and functional analysis of the genome of a nematode egg-parasitic fungus, Pochonia chlamydosporia.</title>
        <authorList>
            <person name="Larriba E."/>
            <person name="Jaime M.D."/>
            <person name="Carbonell-Caballero J."/>
            <person name="Conesa A."/>
            <person name="Dopazo J."/>
            <person name="Nislow C."/>
            <person name="Martin-Nieto J."/>
            <person name="Lopez-Llorca L.V."/>
        </authorList>
    </citation>
    <scope>NUCLEOTIDE SEQUENCE [LARGE SCALE GENOMIC DNA]</scope>
    <source>
        <strain>123</strain>
    </source>
</reference>
<reference key="2">
    <citation type="journal article" date="2021" name="Int. J. Mol. Sci.">
        <title>Putative LysM effectors contribute to fungal lifestyle.</title>
        <authorList>
            <person name="Suarez-Fernandez M."/>
            <person name="Aragon-Perez A."/>
            <person name="Lopez-Llorca L.V."/>
            <person name="Lopez-Moya F."/>
        </authorList>
    </citation>
    <scope>DOMAIN</scope>
    <scope>INDUCTION</scope>
</reference>
<name>LYSM4_POCC1</name>